<reference key="1">
    <citation type="journal article" date="2005" name="Nucleic Acids Res.">
        <title>Genome dynamics and diversity of Shigella species, the etiologic agents of bacillary dysentery.</title>
        <authorList>
            <person name="Yang F."/>
            <person name="Yang J."/>
            <person name="Zhang X."/>
            <person name="Chen L."/>
            <person name="Jiang Y."/>
            <person name="Yan Y."/>
            <person name="Tang X."/>
            <person name="Wang J."/>
            <person name="Xiong Z."/>
            <person name="Dong J."/>
            <person name="Xue Y."/>
            <person name="Zhu Y."/>
            <person name="Xu X."/>
            <person name="Sun L."/>
            <person name="Chen S."/>
            <person name="Nie H."/>
            <person name="Peng J."/>
            <person name="Xu J."/>
            <person name="Wang Y."/>
            <person name="Yuan Z."/>
            <person name="Wen Y."/>
            <person name="Yao Z."/>
            <person name="Shen Y."/>
            <person name="Qiang B."/>
            <person name="Hou Y."/>
            <person name="Yu J."/>
            <person name="Jin Q."/>
        </authorList>
    </citation>
    <scope>NUCLEOTIDE SEQUENCE [LARGE SCALE GENOMIC DNA]</scope>
    <source>
        <strain>Ss046</strain>
    </source>
</reference>
<name>YTFE_SHISS</name>
<gene>
    <name evidence="1" type="primary">ytfE</name>
    <name type="ordered locus">SSON_4394</name>
</gene>
<comment type="function">
    <text evidence="1">Di-iron-containing protein involved in the repair of iron-sulfur clusters damaged by oxidative and nitrosative stress conditions.</text>
</comment>
<comment type="subunit">
    <text evidence="1">Homodimer.</text>
</comment>
<comment type="subcellular location">
    <subcellularLocation>
        <location evidence="1">Cytoplasm</location>
    </subcellularLocation>
</comment>
<comment type="similarity">
    <text evidence="1">Belongs to the RIC family. YtfE subfamily.</text>
</comment>
<accession>Q3YUD8</accession>
<proteinExistence type="inferred from homology"/>
<feature type="chain" id="PRO_0000291703" description="Iron-sulfur cluster repair protein YtfE">
    <location>
        <begin position="1"/>
        <end position="220"/>
    </location>
</feature>
<evidence type="ECO:0000255" key="1">
    <source>
        <dbReference type="HAMAP-Rule" id="MF_01606"/>
    </source>
</evidence>
<organism>
    <name type="scientific">Shigella sonnei (strain Ss046)</name>
    <dbReference type="NCBI Taxonomy" id="300269"/>
    <lineage>
        <taxon>Bacteria</taxon>
        <taxon>Pseudomonadati</taxon>
        <taxon>Pseudomonadota</taxon>
        <taxon>Gammaproteobacteria</taxon>
        <taxon>Enterobacterales</taxon>
        <taxon>Enterobacteriaceae</taxon>
        <taxon>Shigella</taxon>
    </lineage>
</organism>
<protein>
    <recommendedName>
        <fullName evidence="1">Iron-sulfur cluster repair protein YtfE</fullName>
    </recommendedName>
</protein>
<sequence>MAYRDQPLGELALSIPRASALFRKYDMDYCCGGKQTLARAAARKELDVEVIEAELAKLAEQPIEKDWRSAPLAEIIDHIIVRYHDRHREQLPELILQATKVERVHADKPSVPKGLTKYLTMLHEELSSHMMKEEQILFPMIKQGMGSQAMGPISVMESEHDEAGELLEVIKHTTNNVTPPPEACTTWKAMYNGINELIDDLMDHISLENNVLFPRALAGE</sequence>
<keyword id="KW-0963">Cytoplasm</keyword>
<keyword id="KW-0408">Iron</keyword>
<keyword id="KW-0479">Metal-binding</keyword>
<keyword id="KW-1185">Reference proteome</keyword>
<keyword id="KW-0346">Stress response</keyword>
<dbReference type="EMBL" id="CP000038">
    <property type="protein sequence ID" value="AAZ90874.1"/>
    <property type="molecule type" value="Genomic_DNA"/>
</dbReference>
<dbReference type="RefSeq" id="WP_000331456.1">
    <property type="nucleotide sequence ID" value="NC_007384.1"/>
</dbReference>
<dbReference type="SMR" id="Q3YUD8"/>
<dbReference type="GeneID" id="93777612"/>
<dbReference type="KEGG" id="ssn:SSON_4394"/>
<dbReference type="HOGENOM" id="CLU_076075_2_0_6"/>
<dbReference type="Proteomes" id="UP000002529">
    <property type="component" value="Chromosome"/>
</dbReference>
<dbReference type="GO" id="GO:0005737">
    <property type="term" value="C:cytoplasm"/>
    <property type="evidence" value="ECO:0007669"/>
    <property type="project" value="UniProtKB-SubCell"/>
</dbReference>
<dbReference type="GO" id="GO:0046872">
    <property type="term" value="F:metal ion binding"/>
    <property type="evidence" value="ECO:0007669"/>
    <property type="project" value="UniProtKB-KW"/>
</dbReference>
<dbReference type="GO" id="GO:0030091">
    <property type="term" value="P:protein repair"/>
    <property type="evidence" value="ECO:0007669"/>
    <property type="project" value="UniProtKB-UniRule"/>
</dbReference>
<dbReference type="GO" id="GO:0051409">
    <property type="term" value="P:response to nitrosative stress"/>
    <property type="evidence" value="ECO:0007669"/>
    <property type="project" value="UniProtKB-UniRule"/>
</dbReference>
<dbReference type="GO" id="GO:0006979">
    <property type="term" value="P:response to oxidative stress"/>
    <property type="evidence" value="ECO:0007669"/>
    <property type="project" value="UniProtKB-UniRule"/>
</dbReference>
<dbReference type="CDD" id="cd12108">
    <property type="entry name" value="Hr-like"/>
    <property type="match status" value="1"/>
</dbReference>
<dbReference type="FunFam" id="1.20.120.520:FF:000001">
    <property type="entry name" value="Iron-sulfur cluster repair protein YtfE"/>
    <property type="match status" value="1"/>
</dbReference>
<dbReference type="Gene3D" id="1.20.120.520">
    <property type="entry name" value="nmb1532 protein domain like"/>
    <property type="match status" value="1"/>
</dbReference>
<dbReference type="HAMAP" id="MF_01606">
    <property type="entry name" value="RIC_YtfE"/>
    <property type="match status" value="1"/>
</dbReference>
<dbReference type="InterPro" id="IPR023742">
    <property type="entry name" value="FeS-repair_YftE"/>
</dbReference>
<dbReference type="InterPro" id="IPR012312">
    <property type="entry name" value="Hemerythrin-like"/>
</dbReference>
<dbReference type="InterPro" id="IPR019903">
    <property type="entry name" value="RIC_family"/>
</dbReference>
<dbReference type="NCBIfam" id="TIGR03652">
    <property type="entry name" value="FeS_repair_RIC"/>
    <property type="match status" value="1"/>
</dbReference>
<dbReference type="NCBIfam" id="NF008221">
    <property type="entry name" value="PRK10992.1"/>
    <property type="match status" value="1"/>
</dbReference>
<dbReference type="PANTHER" id="PTHR36438">
    <property type="entry name" value="IRON-SULFUR CLUSTER REPAIR PROTEIN YTFE"/>
    <property type="match status" value="1"/>
</dbReference>
<dbReference type="PANTHER" id="PTHR36438:SF1">
    <property type="entry name" value="IRON-SULFUR CLUSTER REPAIR PROTEIN YTFE"/>
    <property type="match status" value="1"/>
</dbReference>
<dbReference type="Pfam" id="PF01814">
    <property type="entry name" value="Hemerythrin"/>
    <property type="match status" value="1"/>
</dbReference>
<dbReference type="Pfam" id="PF04405">
    <property type="entry name" value="ScdA_N"/>
    <property type="match status" value="1"/>
</dbReference>